<feature type="chain" id="PRO_0000211245" description="Paramyosin">
    <location>
        <begin position="1"/>
        <end position="880"/>
    </location>
</feature>
<feature type="region of interest" description="Nonhelical region" evidence="2">
    <location>
        <begin position="1"/>
        <end position="34"/>
    </location>
</feature>
<feature type="region of interest" description="Nonhelical region" evidence="2">
    <location>
        <begin position="860"/>
        <end position="880"/>
    </location>
</feature>
<feature type="coiled-coil region" evidence="2">
    <location>
        <begin position="35"/>
        <end position="859"/>
    </location>
</feature>
<feature type="sequence conflict" description="In Ref. 2; AAA27859." evidence="3" ref="2">
    <original>V</original>
    <variation>I</variation>
    <location>
        <position position="189"/>
    </location>
</feature>
<feature type="sequence conflict" description="In Ref. 2; AAA27859." evidence="3" ref="2">
    <original>D</original>
    <variation>A</variation>
    <location>
        <position position="197"/>
    </location>
</feature>
<feature type="sequence conflict" description="In Ref. 2; AAA27859." evidence="3" ref="2">
    <original>L</original>
    <variation>F</variation>
    <location>
        <position position="251"/>
    </location>
</feature>
<feature type="sequence conflict" description="In Ref. 2; AAA27859." evidence="3" ref="2">
    <original>E</original>
    <variation>Q</variation>
    <location>
        <position position="255"/>
    </location>
</feature>
<feature type="sequence conflict" description="In Ref. 2." evidence="3" ref="2">
    <original>A</original>
    <variation>R</variation>
    <location>
        <position position="696"/>
    </location>
</feature>
<feature type="sequence conflict" description="In Ref. 2; AAA27860." evidence="3" ref="2">
    <original>FRKLKRR</original>
    <variation>IQEAETAA</variation>
    <location>
        <begin position="730"/>
        <end position="736"/>
    </location>
</feature>
<feature type="sequence conflict" description="In Ref. 2; AAA27860." evidence="3" ref="2">
    <original>L</original>
    <variation>LQ</variation>
    <location>
        <position position="825"/>
    </location>
</feature>
<feature type="sequence conflict" description="In Ref. 2; AAA27860." evidence="3" ref="2">
    <original>HQLLRAKMLQRQKFTFSKMSNRDN</original>
    <variation>SSVVTGKNASASKIYVLEDEQ</variation>
    <location>
        <begin position="857"/>
        <end position="880"/>
    </location>
</feature>
<proteinExistence type="evidence at transcript level"/>
<keyword id="KW-0175">Coiled coil</keyword>
<keyword id="KW-0963">Cytoplasm</keyword>
<keyword id="KW-0505">Motor protein</keyword>
<keyword id="KW-0514">Muscle protein</keyword>
<keyword id="KW-0518">Myosin</keyword>
<keyword id="KW-1185">Reference proteome</keyword>
<keyword id="KW-0787">Thick filament</keyword>
<evidence type="ECO:0000250" key="1"/>
<evidence type="ECO:0000255" key="2"/>
<evidence type="ECO:0000305" key="3"/>
<organism>
    <name type="scientific">Brugia malayi</name>
    <name type="common">Filarial nematode worm</name>
    <dbReference type="NCBI Taxonomy" id="6279"/>
    <lineage>
        <taxon>Eukaryota</taxon>
        <taxon>Metazoa</taxon>
        <taxon>Ecdysozoa</taxon>
        <taxon>Nematoda</taxon>
        <taxon>Chromadorea</taxon>
        <taxon>Rhabditida</taxon>
        <taxon>Spirurina</taxon>
        <taxon>Spiruromorpha</taxon>
        <taxon>Filarioidea</taxon>
        <taxon>Onchocercidae</taxon>
        <taxon>Brugia</taxon>
    </lineage>
</organism>
<comment type="function">
    <text>Paramyosin is a major structural component of many thick filaments isolated from invertebrate muscles.</text>
</comment>
<comment type="subunit">
    <text evidence="1">Homodimer.</text>
</comment>
<comment type="subcellular location">
    <subcellularLocation>
        <location>Cytoplasm</location>
        <location>Myofibril</location>
    </subcellularLocation>
    <text>Thick filaments of the myofibrils.</text>
</comment>
<comment type="similarity">
    <text evidence="3">Belongs to the paramyosin family.</text>
</comment>
<protein>
    <recommendedName>
        <fullName>Paramyosin</fullName>
    </recommendedName>
</protein>
<name>MYSP_BRUMA</name>
<sequence length="880" mass="101904">MSGSLYRSPSAALYKSPSMSAFGGLPAAFGSMSVADLGSLTRLEDKIRLLQEDLESARELRNRIERERADLSVQLIALTDRLEDAEGTTDSQIESNRKREAELQKLRKLLEESQLENEDAMNILRKKHQDACLDYAEQIEQLQKKNSKIDRERQRLQHEVIELTATIDQLKKDKHLAEKAAERFEAQTVELSNKVEDLNRHVNDLAQQRQRLQAENNDLLKEIHDQKVQLDNLQHVKYQLAQQLEEARRRLEDAERERSQLQAQLHQVQLELDSVRTALDEESAARAEAEHKLALANTEITQWKSKFDAEVALHHEEVEDLRKKMLQKQAEYEEQIEIMLQKISQLEKAKSRLQSEVEVLIVDLEKAQNTIAILERAKEQLEKTVNELKVRIDELTVELEAAQREARAALAELQKLKNLYEKAVEQKEALARENKKLQDDLHEAKEALADANRKLHELDLENARLAGEIRELQTALKESEAARRDAENRAQRALAELQQLRIEMERRLQEKEEEMEALRKNMQFEIDRLTAALADAEARMKAEISRLKKKYQAEIAELEMTVDNLNRANIEAQKTIKKQSEQLKILQASLEDTQRQLQQTLDQYALAQRKVSALSAELEECKVALDNAIRARKQAEIDLEEANGRITDLVSVNNNLTAIKNKLETELSTAQADLDEATKELHAADERANRALADAARAVEQLHEEQEHSMKIDALRKSLEEQVKQLQVQFRKLKRRLLGGKRVIAKLETRIRDLETALDEETRRHKETQGALRKKDRRIKEVQMQVDEEHKMFVMAQDTADRLLEKLNIQKRQLGEAESLTMANLRVRRYQRELEDAEGRADQAESSLHLIRAKHRHQLLRAKMLQRQKFTFSKMSNRDN</sequence>
<reference key="1">
    <citation type="submission" date="1996-11" db="EMBL/GenBank/DDBJ databases">
        <authorList>
            <person name="Langy S."/>
            <person name="Luquiaud P."/>
            <person name="Nicolas L."/>
        </authorList>
    </citation>
    <scope>NUCLEOTIDE SEQUENCE [MRNA]</scope>
</reference>
<reference key="2">
    <citation type="journal article" date="1991" name="Mol. Biochem. Parasitol.">
        <title>Identification of paramyosin as a potential protective antigen against Brugia malayi infection in jirds.</title>
        <authorList>
            <person name="Li B."/>
            <person name="Chandrashekar R."/>
            <person name="Alvarez R.M."/>
            <person name="Liftis F."/>
            <person name="Weil G.J."/>
        </authorList>
    </citation>
    <scope>NUCLEOTIDE SEQUENCE [MRNA] OF 180-263 AND 684-880</scope>
</reference>
<dbReference type="EMBL" id="U77590">
    <property type="protein sequence ID" value="AAC18613.1"/>
    <property type="molecule type" value="mRNA"/>
</dbReference>
<dbReference type="EMBL" id="M63097">
    <property type="protein sequence ID" value="AAA27859.1"/>
    <property type="molecule type" value="mRNA"/>
</dbReference>
<dbReference type="EMBL" id="M63098">
    <property type="protein sequence ID" value="AAA27860.1"/>
    <property type="molecule type" value="mRNA"/>
</dbReference>
<dbReference type="SMR" id="Q01202"/>
<dbReference type="FunCoup" id="Q01202">
    <property type="interactions" value="43"/>
</dbReference>
<dbReference type="STRING" id="6279.Q01202"/>
<dbReference type="InParanoid" id="Q01202"/>
<dbReference type="Proteomes" id="UP000006672">
    <property type="component" value="Unassembled WGS sequence"/>
</dbReference>
<dbReference type="GO" id="GO:0005923">
    <property type="term" value="C:bicellular tight junction"/>
    <property type="evidence" value="ECO:0007669"/>
    <property type="project" value="TreeGrafter"/>
</dbReference>
<dbReference type="GO" id="GO:0030016">
    <property type="term" value="C:myofibril"/>
    <property type="evidence" value="ECO:0007669"/>
    <property type="project" value="UniProtKB-SubCell"/>
</dbReference>
<dbReference type="GO" id="GO:0016459">
    <property type="term" value="C:myosin complex"/>
    <property type="evidence" value="ECO:0007669"/>
    <property type="project" value="UniProtKB-KW"/>
</dbReference>
<dbReference type="GO" id="GO:0032982">
    <property type="term" value="C:myosin filament"/>
    <property type="evidence" value="ECO:0007669"/>
    <property type="project" value="UniProtKB-KW"/>
</dbReference>
<dbReference type="FunFam" id="1.20.5.370:FF:000001">
    <property type="entry name" value="Myosin heavy chain"/>
    <property type="match status" value="1"/>
</dbReference>
<dbReference type="FunFam" id="1.20.5.340:FF:000035">
    <property type="entry name" value="Paramyosin, long form"/>
    <property type="match status" value="1"/>
</dbReference>
<dbReference type="Gene3D" id="1.20.5.340">
    <property type="match status" value="3"/>
</dbReference>
<dbReference type="Gene3D" id="1.20.5.370">
    <property type="match status" value="1"/>
</dbReference>
<dbReference type="InterPro" id="IPR002928">
    <property type="entry name" value="Myosin_tail"/>
</dbReference>
<dbReference type="InterPro" id="IPR014751">
    <property type="entry name" value="XRCC4-like_C"/>
</dbReference>
<dbReference type="PANTHER" id="PTHR46349">
    <property type="entry name" value="CINGULIN-LIKE PROTEIN 1-RELATED"/>
    <property type="match status" value="1"/>
</dbReference>
<dbReference type="PANTHER" id="PTHR46349:SF6">
    <property type="entry name" value="MYOSIN-6-LIKE"/>
    <property type="match status" value="1"/>
</dbReference>
<dbReference type="Pfam" id="PF01576">
    <property type="entry name" value="Myosin_tail_1"/>
    <property type="match status" value="1"/>
</dbReference>
<dbReference type="SUPFAM" id="SSF90257">
    <property type="entry name" value="Myosin rod fragments"/>
    <property type="match status" value="3"/>
</dbReference>
<accession>Q01202</accession>
<accession>P90711</accession>